<gene>
    <name evidence="1" type="primary">uppP</name>
    <name type="ordered locus">EFER_3002</name>
</gene>
<comment type="function">
    <text evidence="1">Catalyzes the dephosphorylation of undecaprenyl diphosphate (UPP). Confers resistance to bacitracin.</text>
</comment>
<comment type="catalytic activity">
    <reaction evidence="1">
        <text>di-trans,octa-cis-undecaprenyl diphosphate + H2O = di-trans,octa-cis-undecaprenyl phosphate + phosphate + H(+)</text>
        <dbReference type="Rhea" id="RHEA:28094"/>
        <dbReference type="ChEBI" id="CHEBI:15377"/>
        <dbReference type="ChEBI" id="CHEBI:15378"/>
        <dbReference type="ChEBI" id="CHEBI:43474"/>
        <dbReference type="ChEBI" id="CHEBI:58405"/>
        <dbReference type="ChEBI" id="CHEBI:60392"/>
        <dbReference type="EC" id="3.6.1.27"/>
    </reaction>
</comment>
<comment type="subcellular location">
    <subcellularLocation>
        <location evidence="1">Cell inner membrane</location>
        <topology evidence="1">Multi-pass membrane protein</topology>
    </subcellularLocation>
</comment>
<comment type="miscellaneous">
    <text>Bacitracin is thought to be involved in the inhibition of peptidoglycan synthesis by sequestering undecaprenyl diphosphate, thereby reducing the pool of lipid carrier available.</text>
</comment>
<comment type="similarity">
    <text evidence="1">Belongs to the UppP family.</text>
</comment>
<reference key="1">
    <citation type="journal article" date="2009" name="PLoS Genet.">
        <title>Organised genome dynamics in the Escherichia coli species results in highly diverse adaptive paths.</title>
        <authorList>
            <person name="Touchon M."/>
            <person name="Hoede C."/>
            <person name="Tenaillon O."/>
            <person name="Barbe V."/>
            <person name="Baeriswyl S."/>
            <person name="Bidet P."/>
            <person name="Bingen E."/>
            <person name="Bonacorsi S."/>
            <person name="Bouchier C."/>
            <person name="Bouvet O."/>
            <person name="Calteau A."/>
            <person name="Chiapello H."/>
            <person name="Clermont O."/>
            <person name="Cruveiller S."/>
            <person name="Danchin A."/>
            <person name="Diard M."/>
            <person name="Dossat C."/>
            <person name="Karoui M.E."/>
            <person name="Frapy E."/>
            <person name="Garry L."/>
            <person name="Ghigo J.M."/>
            <person name="Gilles A.M."/>
            <person name="Johnson J."/>
            <person name="Le Bouguenec C."/>
            <person name="Lescat M."/>
            <person name="Mangenot S."/>
            <person name="Martinez-Jehanne V."/>
            <person name="Matic I."/>
            <person name="Nassif X."/>
            <person name="Oztas S."/>
            <person name="Petit M.A."/>
            <person name="Pichon C."/>
            <person name="Rouy Z."/>
            <person name="Ruf C.S."/>
            <person name="Schneider D."/>
            <person name="Tourret J."/>
            <person name="Vacherie B."/>
            <person name="Vallenet D."/>
            <person name="Medigue C."/>
            <person name="Rocha E.P.C."/>
            <person name="Denamur E."/>
        </authorList>
    </citation>
    <scope>NUCLEOTIDE SEQUENCE [LARGE SCALE GENOMIC DNA]</scope>
    <source>
        <strain>ATCC 35469 / DSM 13698 / BCRC 15582 / CCUG 18766 / IAM 14443 / JCM 21226 / LMG 7866 / NBRC 102419 / NCTC 12128 / CDC 0568-73</strain>
    </source>
</reference>
<sequence length="273" mass="29715">MSDMHSLLVAAILGVVEGLTEFLPVSSTGHMIIVGHLLGFEGDTAKTFEVVIQLGSILAVVVMFWRRLFGLIGIHFGRPLQHEGESKGRLTLIHILLGMIPAVVLGLLFHDAIKSLFNPINVMYALVVGGLLLIAAECLKPKEPRAPGLDDMTYRQAFMIGCFQCLALWPGFSRSGATISGGMLMGVSRYAASEFSFLLAVPMMMGATALDLYKSWGFLTTGDIPMFAVGFITAFVVALVAIKTFLQLIKRISFIPFAIYRFIVAAAVYVVFF</sequence>
<proteinExistence type="inferred from homology"/>
<feature type="chain" id="PRO_1000197372" description="Undecaprenyl-diphosphatase">
    <location>
        <begin position="1"/>
        <end position="273"/>
    </location>
</feature>
<feature type="transmembrane region" description="Helical" evidence="1">
    <location>
        <begin position="6"/>
        <end position="26"/>
    </location>
</feature>
<feature type="transmembrane region" description="Helical" evidence="1">
    <location>
        <begin position="45"/>
        <end position="65"/>
    </location>
</feature>
<feature type="transmembrane region" description="Helical" evidence="1">
    <location>
        <begin position="90"/>
        <end position="110"/>
    </location>
</feature>
<feature type="transmembrane region" description="Helical" evidence="1">
    <location>
        <begin position="116"/>
        <end position="136"/>
    </location>
</feature>
<feature type="transmembrane region" description="Helical" evidence="1">
    <location>
        <begin position="190"/>
        <end position="210"/>
    </location>
</feature>
<feature type="transmembrane region" description="Helical" evidence="1">
    <location>
        <begin position="222"/>
        <end position="242"/>
    </location>
</feature>
<feature type="transmembrane region" description="Helical" evidence="1">
    <location>
        <begin position="252"/>
        <end position="272"/>
    </location>
</feature>
<organism>
    <name type="scientific">Escherichia fergusonii (strain ATCC 35469 / DSM 13698 / CCUG 18766 / IAM 14443 / JCM 21226 / LMG 7866 / NBRC 102419 / NCTC 12128 / CDC 0568-73)</name>
    <dbReference type="NCBI Taxonomy" id="585054"/>
    <lineage>
        <taxon>Bacteria</taxon>
        <taxon>Pseudomonadati</taxon>
        <taxon>Pseudomonadota</taxon>
        <taxon>Gammaproteobacteria</taxon>
        <taxon>Enterobacterales</taxon>
        <taxon>Enterobacteriaceae</taxon>
        <taxon>Escherichia</taxon>
    </lineage>
</organism>
<name>UPPP_ESCF3</name>
<accession>B7LQD5</accession>
<keyword id="KW-0046">Antibiotic resistance</keyword>
<keyword id="KW-0997">Cell inner membrane</keyword>
<keyword id="KW-1003">Cell membrane</keyword>
<keyword id="KW-0133">Cell shape</keyword>
<keyword id="KW-0961">Cell wall biogenesis/degradation</keyword>
<keyword id="KW-0378">Hydrolase</keyword>
<keyword id="KW-0472">Membrane</keyword>
<keyword id="KW-0573">Peptidoglycan synthesis</keyword>
<keyword id="KW-0812">Transmembrane</keyword>
<keyword id="KW-1133">Transmembrane helix</keyword>
<evidence type="ECO:0000255" key="1">
    <source>
        <dbReference type="HAMAP-Rule" id="MF_01006"/>
    </source>
</evidence>
<dbReference type="EC" id="3.6.1.27" evidence="1"/>
<dbReference type="EMBL" id="CU928158">
    <property type="protein sequence ID" value="CAQ90495.1"/>
    <property type="molecule type" value="Genomic_DNA"/>
</dbReference>
<dbReference type="SMR" id="B7LQD5"/>
<dbReference type="KEGG" id="efe:EFER_3002"/>
<dbReference type="HOGENOM" id="CLU_060296_2_0_6"/>
<dbReference type="OrthoDB" id="9808289at2"/>
<dbReference type="Proteomes" id="UP000000745">
    <property type="component" value="Chromosome"/>
</dbReference>
<dbReference type="GO" id="GO:0005886">
    <property type="term" value="C:plasma membrane"/>
    <property type="evidence" value="ECO:0007669"/>
    <property type="project" value="UniProtKB-SubCell"/>
</dbReference>
<dbReference type="GO" id="GO:0050380">
    <property type="term" value="F:undecaprenyl-diphosphatase activity"/>
    <property type="evidence" value="ECO:0007669"/>
    <property type="project" value="UniProtKB-UniRule"/>
</dbReference>
<dbReference type="GO" id="GO:0071555">
    <property type="term" value="P:cell wall organization"/>
    <property type="evidence" value="ECO:0007669"/>
    <property type="project" value="UniProtKB-KW"/>
</dbReference>
<dbReference type="GO" id="GO:0009252">
    <property type="term" value="P:peptidoglycan biosynthetic process"/>
    <property type="evidence" value="ECO:0007669"/>
    <property type="project" value="UniProtKB-KW"/>
</dbReference>
<dbReference type="GO" id="GO:0008360">
    <property type="term" value="P:regulation of cell shape"/>
    <property type="evidence" value="ECO:0007669"/>
    <property type="project" value="UniProtKB-KW"/>
</dbReference>
<dbReference type="GO" id="GO:0046677">
    <property type="term" value="P:response to antibiotic"/>
    <property type="evidence" value="ECO:0007669"/>
    <property type="project" value="UniProtKB-UniRule"/>
</dbReference>
<dbReference type="HAMAP" id="MF_01006">
    <property type="entry name" value="Undec_diphosphatase"/>
    <property type="match status" value="1"/>
</dbReference>
<dbReference type="InterPro" id="IPR003824">
    <property type="entry name" value="UppP"/>
</dbReference>
<dbReference type="NCBIfam" id="NF001388">
    <property type="entry name" value="PRK00281.1-1"/>
    <property type="match status" value="1"/>
</dbReference>
<dbReference type="NCBIfam" id="NF001389">
    <property type="entry name" value="PRK00281.1-2"/>
    <property type="match status" value="1"/>
</dbReference>
<dbReference type="NCBIfam" id="NF001390">
    <property type="entry name" value="PRK00281.1-4"/>
    <property type="match status" value="1"/>
</dbReference>
<dbReference type="NCBIfam" id="TIGR00753">
    <property type="entry name" value="undec_PP_bacA"/>
    <property type="match status" value="1"/>
</dbReference>
<dbReference type="PANTHER" id="PTHR30622">
    <property type="entry name" value="UNDECAPRENYL-DIPHOSPHATASE"/>
    <property type="match status" value="1"/>
</dbReference>
<dbReference type="PANTHER" id="PTHR30622:SF3">
    <property type="entry name" value="UNDECAPRENYL-DIPHOSPHATASE"/>
    <property type="match status" value="1"/>
</dbReference>
<dbReference type="Pfam" id="PF02673">
    <property type="entry name" value="BacA"/>
    <property type="match status" value="1"/>
</dbReference>
<protein>
    <recommendedName>
        <fullName evidence="1">Undecaprenyl-diphosphatase</fullName>
        <ecNumber evidence="1">3.6.1.27</ecNumber>
    </recommendedName>
    <alternativeName>
        <fullName evidence="1">Bacitracin resistance protein</fullName>
    </alternativeName>
    <alternativeName>
        <fullName evidence="1">Undecaprenyl pyrophosphate phosphatase</fullName>
    </alternativeName>
</protein>